<accession>P67652</accession>
<accession>Q8XEL8</accession>
<sequence length="161" mass="17374">MKYDTSELCDIYQEDVNVVEPLFSNFGGRSSFGGQIITVKCFEDNGLLYDLLEQNGRGRVLLVDGGGSVRRALVDAELARLATQNEWEGLVIYGAVRQVDDLEELDIGIQAIAAIPVGAAGEGIGESDVRVNFGGVTFFSGDHLYADNTGIILSEDPLDIE</sequence>
<organism>
    <name type="scientific">Salmonella typhi</name>
    <dbReference type="NCBI Taxonomy" id="90370"/>
    <lineage>
        <taxon>Bacteria</taxon>
        <taxon>Pseudomonadati</taxon>
        <taxon>Pseudomonadota</taxon>
        <taxon>Gammaproteobacteria</taxon>
        <taxon>Enterobacterales</taxon>
        <taxon>Enterobacteriaceae</taxon>
        <taxon>Salmonella</taxon>
    </lineage>
</organism>
<feature type="chain" id="PRO_0000209634" description="Regulator of ribonuclease activity A">
    <location>
        <begin position="1"/>
        <end position="161"/>
    </location>
</feature>
<protein>
    <recommendedName>
        <fullName evidence="1">Regulator of ribonuclease activity A</fullName>
    </recommendedName>
</protein>
<reference key="1">
    <citation type="journal article" date="2001" name="Nature">
        <title>Complete genome sequence of a multiple drug resistant Salmonella enterica serovar Typhi CT18.</title>
        <authorList>
            <person name="Parkhill J."/>
            <person name="Dougan G."/>
            <person name="James K.D."/>
            <person name="Thomson N.R."/>
            <person name="Pickard D."/>
            <person name="Wain J."/>
            <person name="Churcher C.M."/>
            <person name="Mungall K.L."/>
            <person name="Bentley S.D."/>
            <person name="Holden M.T.G."/>
            <person name="Sebaihia M."/>
            <person name="Baker S."/>
            <person name="Basham D."/>
            <person name="Brooks K."/>
            <person name="Chillingworth T."/>
            <person name="Connerton P."/>
            <person name="Cronin A."/>
            <person name="Davis P."/>
            <person name="Davies R.M."/>
            <person name="Dowd L."/>
            <person name="White N."/>
            <person name="Farrar J."/>
            <person name="Feltwell T."/>
            <person name="Hamlin N."/>
            <person name="Haque A."/>
            <person name="Hien T.T."/>
            <person name="Holroyd S."/>
            <person name="Jagels K."/>
            <person name="Krogh A."/>
            <person name="Larsen T.S."/>
            <person name="Leather S."/>
            <person name="Moule S."/>
            <person name="O'Gaora P."/>
            <person name="Parry C."/>
            <person name="Quail M.A."/>
            <person name="Rutherford K.M."/>
            <person name="Simmonds M."/>
            <person name="Skelton J."/>
            <person name="Stevens K."/>
            <person name="Whitehead S."/>
            <person name="Barrell B.G."/>
        </authorList>
    </citation>
    <scope>NUCLEOTIDE SEQUENCE [LARGE SCALE GENOMIC DNA]</scope>
    <source>
        <strain>CT18</strain>
    </source>
</reference>
<reference key="2">
    <citation type="journal article" date="2003" name="J. Bacteriol.">
        <title>Comparative genomics of Salmonella enterica serovar Typhi strains Ty2 and CT18.</title>
        <authorList>
            <person name="Deng W."/>
            <person name="Liou S.-R."/>
            <person name="Plunkett G. III"/>
            <person name="Mayhew G.F."/>
            <person name="Rose D.J."/>
            <person name="Burland V."/>
            <person name="Kodoyianni V."/>
            <person name="Schwartz D.C."/>
            <person name="Blattner F.R."/>
        </authorList>
    </citation>
    <scope>NUCLEOTIDE SEQUENCE [LARGE SCALE GENOMIC DNA]</scope>
    <source>
        <strain>ATCC 700931 / Ty2</strain>
    </source>
</reference>
<proteinExistence type="inferred from homology"/>
<comment type="function">
    <text evidence="1">Globally modulates RNA abundance by binding to RNase E (Rne) and regulating its endonucleolytic activity. Can modulate Rne action in a substrate-dependent manner by altering the composition of the degradosome. Modulates RNA-binding and helicase activities of the degradosome.</text>
</comment>
<comment type="subunit">
    <text evidence="1">Homotrimer. Binds to both RNA-binding sites in the C-terminal region of Rne and to RhlB.</text>
</comment>
<comment type="subcellular location">
    <subcellularLocation>
        <location evidence="1">Cytoplasm</location>
    </subcellularLocation>
</comment>
<comment type="similarity">
    <text evidence="1">Belongs to the RraA family.</text>
</comment>
<gene>
    <name evidence="1" type="primary">rraA</name>
    <name type="ordered locus">STY3781</name>
    <name type="ordered locus">t3529</name>
</gene>
<dbReference type="EMBL" id="AL513382">
    <property type="protein sequence ID" value="CAD09534.1"/>
    <property type="molecule type" value="Genomic_DNA"/>
</dbReference>
<dbReference type="EMBL" id="AE014613">
    <property type="protein sequence ID" value="AAO71036.1"/>
    <property type="molecule type" value="Genomic_DNA"/>
</dbReference>
<dbReference type="RefSeq" id="NP_457963.1">
    <property type="nucleotide sequence ID" value="NC_003198.1"/>
</dbReference>
<dbReference type="RefSeq" id="WP_000872918.1">
    <property type="nucleotide sequence ID" value="NZ_WSUR01000010.1"/>
</dbReference>
<dbReference type="SMR" id="P67652"/>
<dbReference type="STRING" id="220341.gene:17587645"/>
<dbReference type="KEGG" id="stt:t3529"/>
<dbReference type="KEGG" id="sty:STY3781"/>
<dbReference type="PATRIC" id="fig|220341.7.peg.3859"/>
<dbReference type="eggNOG" id="COG0684">
    <property type="taxonomic scope" value="Bacteria"/>
</dbReference>
<dbReference type="HOGENOM" id="CLU_072626_4_0_6"/>
<dbReference type="OMA" id="RSCDTQF"/>
<dbReference type="OrthoDB" id="943692at2"/>
<dbReference type="Proteomes" id="UP000000541">
    <property type="component" value="Chromosome"/>
</dbReference>
<dbReference type="Proteomes" id="UP000002670">
    <property type="component" value="Chromosome"/>
</dbReference>
<dbReference type="GO" id="GO:0005829">
    <property type="term" value="C:cytosol"/>
    <property type="evidence" value="ECO:0007669"/>
    <property type="project" value="TreeGrafter"/>
</dbReference>
<dbReference type="GO" id="GO:0060698">
    <property type="term" value="F:endoribonuclease inhibitor activity"/>
    <property type="evidence" value="ECO:0007669"/>
    <property type="project" value="UniProtKB-UniRule"/>
</dbReference>
<dbReference type="GO" id="GO:0019899">
    <property type="term" value="F:enzyme binding"/>
    <property type="evidence" value="ECO:0007669"/>
    <property type="project" value="UniProtKB-UniRule"/>
</dbReference>
<dbReference type="GO" id="GO:1902369">
    <property type="term" value="P:negative regulation of RNA catabolic process"/>
    <property type="evidence" value="ECO:0007669"/>
    <property type="project" value="TreeGrafter"/>
</dbReference>
<dbReference type="CDD" id="cd16841">
    <property type="entry name" value="RraA_family"/>
    <property type="match status" value="1"/>
</dbReference>
<dbReference type="FunFam" id="3.50.30.40:FF:000001">
    <property type="entry name" value="Regulator of ribonuclease activity A"/>
    <property type="match status" value="1"/>
</dbReference>
<dbReference type="Gene3D" id="3.50.30.40">
    <property type="entry name" value="Ribonuclease E inhibitor RraA/RraA-like"/>
    <property type="match status" value="1"/>
</dbReference>
<dbReference type="HAMAP" id="MF_00471">
    <property type="entry name" value="RraA"/>
    <property type="match status" value="1"/>
</dbReference>
<dbReference type="InterPro" id="IPR010203">
    <property type="entry name" value="RraA"/>
</dbReference>
<dbReference type="InterPro" id="IPR005493">
    <property type="entry name" value="RraA/RraA-like"/>
</dbReference>
<dbReference type="InterPro" id="IPR036704">
    <property type="entry name" value="RraA/RraA-like_sf"/>
</dbReference>
<dbReference type="InterPro" id="IPR014339">
    <property type="entry name" value="RraA_gpbac"/>
</dbReference>
<dbReference type="NCBIfam" id="TIGR01935">
    <property type="entry name" value="NOT-MenG"/>
    <property type="match status" value="1"/>
</dbReference>
<dbReference type="NCBIfam" id="NF006875">
    <property type="entry name" value="PRK09372.1"/>
    <property type="match status" value="1"/>
</dbReference>
<dbReference type="NCBIfam" id="TIGR02998">
    <property type="entry name" value="RraA_entero"/>
    <property type="match status" value="1"/>
</dbReference>
<dbReference type="PANTHER" id="PTHR33254">
    <property type="entry name" value="4-HYDROXY-4-METHYL-2-OXOGLUTARATE ALDOLASE 3-RELATED"/>
    <property type="match status" value="1"/>
</dbReference>
<dbReference type="PANTHER" id="PTHR33254:SF29">
    <property type="entry name" value="REGULATOR OF RIBONUCLEASE ACTIVITY A"/>
    <property type="match status" value="1"/>
</dbReference>
<dbReference type="Pfam" id="PF03737">
    <property type="entry name" value="RraA-like"/>
    <property type="match status" value="1"/>
</dbReference>
<dbReference type="SUPFAM" id="SSF89562">
    <property type="entry name" value="RraA-like"/>
    <property type="match status" value="1"/>
</dbReference>
<keyword id="KW-0963">Cytoplasm</keyword>
<name>RRAA_SALTI</name>
<evidence type="ECO:0000255" key="1">
    <source>
        <dbReference type="HAMAP-Rule" id="MF_00471"/>
    </source>
</evidence>